<accession>B9L7R8</accession>
<sequence>MPGIVVHQGEDFESAYRKFKRQVDRNLIVVELRKRRFYEPPSERRKKEKIATRKKILRKLWMLRRYESRL</sequence>
<evidence type="ECO:0000255" key="1">
    <source>
        <dbReference type="HAMAP-Rule" id="MF_00358"/>
    </source>
</evidence>
<evidence type="ECO:0000305" key="2"/>
<keyword id="KW-0687">Ribonucleoprotein</keyword>
<keyword id="KW-0689">Ribosomal protein</keyword>
<proteinExistence type="inferred from homology"/>
<feature type="chain" id="PRO_1000133482" description="Small ribosomal subunit protein bS21">
    <location>
        <begin position="1"/>
        <end position="70"/>
    </location>
</feature>
<name>RS21_NAUPA</name>
<comment type="similarity">
    <text evidence="1">Belongs to the bacterial ribosomal protein bS21 family.</text>
</comment>
<dbReference type="EMBL" id="CP001279">
    <property type="protein sequence ID" value="ACM92299.1"/>
    <property type="molecule type" value="Genomic_DNA"/>
</dbReference>
<dbReference type="RefSeq" id="WP_012663671.1">
    <property type="nucleotide sequence ID" value="NC_012115.1"/>
</dbReference>
<dbReference type="SMR" id="B9L7R8"/>
<dbReference type="STRING" id="598659.NAMH_0252"/>
<dbReference type="KEGG" id="nam:NAMH_0252"/>
<dbReference type="eggNOG" id="COG0828">
    <property type="taxonomic scope" value="Bacteria"/>
</dbReference>
<dbReference type="HOGENOM" id="CLU_159258_1_1_7"/>
<dbReference type="OrthoDB" id="9799244at2"/>
<dbReference type="Proteomes" id="UP000000448">
    <property type="component" value="Chromosome"/>
</dbReference>
<dbReference type="GO" id="GO:1990904">
    <property type="term" value="C:ribonucleoprotein complex"/>
    <property type="evidence" value="ECO:0007669"/>
    <property type="project" value="UniProtKB-KW"/>
</dbReference>
<dbReference type="GO" id="GO:0005840">
    <property type="term" value="C:ribosome"/>
    <property type="evidence" value="ECO:0007669"/>
    <property type="project" value="UniProtKB-KW"/>
</dbReference>
<dbReference type="GO" id="GO:0003735">
    <property type="term" value="F:structural constituent of ribosome"/>
    <property type="evidence" value="ECO:0007669"/>
    <property type="project" value="InterPro"/>
</dbReference>
<dbReference type="GO" id="GO:0006412">
    <property type="term" value="P:translation"/>
    <property type="evidence" value="ECO:0007669"/>
    <property type="project" value="UniProtKB-UniRule"/>
</dbReference>
<dbReference type="Gene3D" id="1.20.5.1150">
    <property type="entry name" value="Ribosomal protein S8"/>
    <property type="match status" value="1"/>
</dbReference>
<dbReference type="HAMAP" id="MF_00358">
    <property type="entry name" value="Ribosomal_bS21"/>
    <property type="match status" value="1"/>
</dbReference>
<dbReference type="InterPro" id="IPR001911">
    <property type="entry name" value="Ribosomal_bS21"/>
</dbReference>
<dbReference type="InterPro" id="IPR038380">
    <property type="entry name" value="Ribosomal_bS21_sf"/>
</dbReference>
<dbReference type="NCBIfam" id="TIGR00030">
    <property type="entry name" value="S21p"/>
    <property type="match status" value="1"/>
</dbReference>
<dbReference type="PANTHER" id="PTHR21109">
    <property type="entry name" value="MITOCHONDRIAL 28S RIBOSOMAL PROTEIN S21"/>
    <property type="match status" value="1"/>
</dbReference>
<dbReference type="PANTHER" id="PTHR21109:SF22">
    <property type="entry name" value="SMALL RIBOSOMAL SUBUNIT PROTEIN BS21"/>
    <property type="match status" value="1"/>
</dbReference>
<dbReference type="Pfam" id="PF01165">
    <property type="entry name" value="Ribosomal_S21"/>
    <property type="match status" value="1"/>
</dbReference>
<dbReference type="PRINTS" id="PR00976">
    <property type="entry name" value="RIBOSOMALS21"/>
</dbReference>
<organism>
    <name type="scientific">Nautilia profundicola (strain ATCC BAA-1463 / DSM 18972 / AmH)</name>
    <dbReference type="NCBI Taxonomy" id="598659"/>
    <lineage>
        <taxon>Bacteria</taxon>
        <taxon>Pseudomonadati</taxon>
        <taxon>Campylobacterota</taxon>
        <taxon>Epsilonproteobacteria</taxon>
        <taxon>Nautiliales</taxon>
        <taxon>Nautiliaceae</taxon>
        <taxon>Nautilia</taxon>
    </lineage>
</organism>
<reference key="1">
    <citation type="journal article" date="2009" name="PLoS Genet.">
        <title>Adaptations to submarine hydrothermal environments exemplified by the genome of Nautilia profundicola.</title>
        <authorList>
            <person name="Campbell B.J."/>
            <person name="Smith J.L."/>
            <person name="Hanson T.E."/>
            <person name="Klotz M.G."/>
            <person name="Stein L.Y."/>
            <person name="Lee C.K."/>
            <person name="Wu D."/>
            <person name="Robinson J.M."/>
            <person name="Khouri H.M."/>
            <person name="Eisen J.A."/>
            <person name="Cary S.C."/>
        </authorList>
    </citation>
    <scope>NUCLEOTIDE SEQUENCE [LARGE SCALE GENOMIC DNA]</scope>
    <source>
        <strain>ATCC BAA-1463 / DSM 18972 / AmH</strain>
    </source>
</reference>
<protein>
    <recommendedName>
        <fullName evidence="1">Small ribosomal subunit protein bS21</fullName>
    </recommendedName>
    <alternativeName>
        <fullName evidence="2">30S ribosomal protein S21</fullName>
    </alternativeName>
</protein>
<gene>
    <name evidence="1" type="primary">rpsU</name>
    <name type="ordered locus">NAMH_0252</name>
</gene>